<comment type="function">
    <text evidence="1">Transcriptional activator that binds specific DNA sequence. Functions as a response regulator involved in His-to-Asp phosphorelay signal transduction system. Phosphorylation of the Asp residue in the receiver domain activates the ability of the protein to promote the transcription of target genes. May directly activate some type-A response regulators in response to cytokinins.</text>
</comment>
<comment type="subcellular location">
    <subcellularLocation>
        <location evidence="3">Nucleus</location>
    </subcellularLocation>
</comment>
<comment type="PTM">
    <text evidence="5">Two-component system major event consists of a His-to-Asp phosphorelay between a sensor histidine kinase (HK) and a response regulator (RR). In plants, the His-to-Asp phosphorelay involves an additional intermediate named Histidine-containing phosphotransfer protein (HPt). This multistep phosphorelay consists of a His-Asp-His-Asp sequential transfer of a phosphate group between first a His and an Asp of the HK protein, followed by the transfer to a conserved His of the HPt protein and finally the transfer to an Asp in the receiver domain of the RR protein.</text>
</comment>
<comment type="similarity">
    <text evidence="5">Belongs to the ARR family. Type-B subfamily.</text>
</comment>
<sequence>MAQNEGIPNGTLSAMVIDEDKCHADSTCSMICTQLNFCVTVFTSPIKALDFLQNQAEGVHLVLADVQMEEMNGFEFLKVARELHKSIQVIMMSTETTIYTMKRCVQLGAQILVKKPLDVVTIQNLWQHLDIKVLKMEKIKDMLQGVGDKSTCANEMNSFPENQKDGTKRKYYLMWTPHLQKKFLHALEILGEGQISLMIMDVDNIDRKQISTHLQKHRLQLKKKLSKASFTKGSNEDTSNPSAKNHLTCRTMTLQPHPYTNQPAETTMQIHSEDVEHDDIYDAMRRALQDGTAFDESKYSSDPFSNEDEDVVGDGYADKANAIDSSGDHYQVAVVLTTPHNVDYTQEIMNKVTTSDDVQVTRGGKATVSRLVDYSDSDSD</sequence>
<proteinExistence type="inferred from homology"/>
<name>ORR28_ORYSI</name>
<feature type="chain" id="PRO_0000433852" description="Two-component response regulator ORR28">
    <location>
        <begin position="1"/>
        <end position="380"/>
    </location>
</feature>
<feature type="domain" description="Response regulatory" evidence="2">
    <location>
        <begin position="13"/>
        <end position="130"/>
    </location>
</feature>
<feature type="DNA-binding region" description="Myb-like GARP" evidence="3">
    <location>
        <begin position="169"/>
        <end position="223"/>
    </location>
</feature>
<feature type="region of interest" description="Disordered" evidence="4">
    <location>
        <begin position="225"/>
        <end position="245"/>
    </location>
</feature>
<feature type="compositionally biased region" description="Polar residues" evidence="4">
    <location>
        <begin position="228"/>
        <end position="245"/>
    </location>
</feature>
<feature type="modified residue" description="4-aspartylphosphate" evidence="2">
    <location>
        <position position="65"/>
    </location>
</feature>
<organism>
    <name type="scientific">Oryza sativa subsp. indica</name>
    <name type="common">Rice</name>
    <dbReference type="NCBI Taxonomy" id="39946"/>
    <lineage>
        <taxon>Eukaryota</taxon>
        <taxon>Viridiplantae</taxon>
        <taxon>Streptophyta</taxon>
        <taxon>Embryophyta</taxon>
        <taxon>Tracheophyta</taxon>
        <taxon>Spermatophyta</taxon>
        <taxon>Magnoliopsida</taxon>
        <taxon>Liliopsida</taxon>
        <taxon>Poales</taxon>
        <taxon>Poaceae</taxon>
        <taxon>BOP clade</taxon>
        <taxon>Oryzoideae</taxon>
        <taxon>Oryzeae</taxon>
        <taxon>Oryzinae</taxon>
        <taxon>Oryza</taxon>
        <taxon>Oryza sativa</taxon>
    </lineage>
</organism>
<reference key="1">
    <citation type="journal article" date="2005" name="PLoS Biol.">
        <title>The genomes of Oryza sativa: a history of duplications.</title>
        <authorList>
            <person name="Yu J."/>
            <person name="Wang J."/>
            <person name="Lin W."/>
            <person name="Li S."/>
            <person name="Li H."/>
            <person name="Zhou J."/>
            <person name="Ni P."/>
            <person name="Dong W."/>
            <person name="Hu S."/>
            <person name="Zeng C."/>
            <person name="Zhang J."/>
            <person name="Zhang Y."/>
            <person name="Li R."/>
            <person name="Xu Z."/>
            <person name="Li S."/>
            <person name="Li X."/>
            <person name="Zheng H."/>
            <person name="Cong L."/>
            <person name="Lin L."/>
            <person name="Yin J."/>
            <person name="Geng J."/>
            <person name="Li G."/>
            <person name="Shi J."/>
            <person name="Liu J."/>
            <person name="Lv H."/>
            <person name="Li J."/>
            <person name="Wang J."/>
            <person name="Deng Y."/>
            <person name="Ran L."/>
            <person name="Shi X."/>
            <person name="Wang X."/>
            <person name="Wu Q."/>
            <person name="Li C."/>
            <person name="Ren X."/>
            <person name="Wang J."/>
            <person name="Wang X."/>
            <person name="Li D."/>
            <person name="Liu D."/>
            <person name="Zhang X."/>
            <person name="Ji Z."/>
            <person name="Zhao W."/>
            <person name="Sun Y."/>
            <person name="Zhang Z."/>
            <person name="Bao J."/>
            <person name="Han Y."/>
            <person name="Dong L."/>
            <person name="Ji J."/>
            <person name="Chen P."/>
            <person name="Wu S."/>
            <person name="Liu J."/>
            <person name="Xiao Y."/>
            <person name="Bu D."/>
            <person name="Tan J."/>
            <person name="Yang L."/>
            <person name="Ye C."/>
            <person name="Zhang J."/>
            <person name="Xu J."/>
            <person name="Zhou Y."/>
            <person name="Yu Y."/>
            <person name="Zhang B."/>
            <person name="Zhuang S."/>
            <person name="Wei H."/>
            <person name="Liu B."/>
            <person name="Lei M."/>
            <person name="Yu H."/>
            <person name="Li Y."/>
            <person name="Xu H."/>
            <person name="Wei S."/>
            <person name="He X."/>
            <person name="Fang L."/>
            <person name="Zhang Z."/>
            <person name="Zhang Y."/>
            <person name="Huang X."/>
            <person name="Su Z."/>
            <person name="Tong W."/>
            <person name="Li J."/>
            <person name="Tong Z."/>
            <person name="Li S."/>
            <person name="Ye J."/>
            <person name="Wang L."/>
            <person name="Fang L."/>
            <person name="Lei T."/>
            <person name="Chen C.-S."/>
            <person name="Chen H.-C."/>
            <person name="Xu Z."/>
            <person name="Li H."/>
            <person name="Huang H."/>
            <person name="Zhang F."/>
            <person name="Xu H."/>
            <person name="Li N."/>
            <person name="Zhao C."/>
            <person name="Li S."/>
            <person name="Dong L."/>
            <person name="Huang Y."/>
            <person name="Li L."/>
            <person name="Xi Y."/>
            <person name="Qi Q."/>
            <person name="Li W."/>
            <person name="Zhang B."/>
            <person name="Hu W."/>
            <person name="Zhang Y."/>
            <person name="Tian X."/>
            <person name="Jiao Y."/>
            <person name="Liang X."/>
            <person name="Jin J."/>
            <person name="Gao L."/>
            <person name="Zheng W."/>
            <person name="Hao B."/>
            <person name="Liu S.-M."/>
            <person name="Wang W."/>
            <person name="Yuan L."/>
            <person name="Cao M."/>
            <person name="McDermott J."/>
            <person name="Samudrala R."/>
            <person name="Wang J."/>
            <person name="Wong G.K.-S."/>
            <person name="Yang H."/>
        </authorList>
    </citation>
    <scope>NUCLEOTIDE SEQUENCE [LARGE SCALE GENOMIC DNA]</scope>
    <source>
        <strain>cv. 93-11</strain>
    </source>
</reference>
<keyword id="KW-0010">Activator</keyword>
<keyword id="KW-0932">Cytokinin signaling pathway</keyword>
<keyword id="KW-0238">DNA-binding</keyword>
<keyword id="KW-0539">Nucleus</keyword>
<keyword id="KW-0597">Phosphoprotein</keyword>
<keyword id="KW-1185">Reference proteome</keyword>
<keyword id="KW-0804">Transcription</keyword>
<keyword id="KW-0805">Transcription regulation</keyword>
<keyword id="KW-0902">Two-component regulatory system</keyword>
<dbReference type="EMBL" id="CM000129">
    <property type="protein sequence ID" value="EAY93660.1"/>
    <property type="molecule type" value="Genomic_DNA"/>
</dbReference>
<dbReference type="SMR" id="A2XS50"/>
<dbReference type="STRING" id="39946.A2XS50"/>
<dbReference type="EnsemblPlants" id="BGIOSGA016169-TA">
    <property type="protein sequence ID" value="BGIOSGA016169-PA"/>
    <property type="gene ID" value="BGIOSGA016169"/>
</dbReference>
<dbReference type="Gramene" id="BGIOSGA016169-TA">
    <property type="protein sequence ID" value="BGIOSGA016169-PA"/>
    <property type="gene ID" value="BGIOSGA016169"/>
</dbReference>
<dbReference type="HOGENOM" id="CLU_770221_0_0_1"/>
<dbReference type="OMA" id="STCANEM"/>
<dbReference type="Proteomes" id="UP000007015">
    <property type="component" value="Chromosome 4"/>
</dbReference>
<dbReference type="GO" id="GO:0005634">
    <property type="term" value="C:nucleus"/>
    <property type="evidence" value="ECO:0007669"/>
    <property type="project" value="UniProtKB-SubCell"/>
</dbReference>
<dbReference type="GO" id="GO:0003677">
    <property type="term" value="F:DNA binding"/>
    <property type="evidence" value="ECO:0007669"/>
    <property type="project" value="UniProtKB-KW"/>
</dbReference>
<dbReference type="GO" id="GO:0009736">
    <property type="term" value="P:cytokinin-activated signaling pathway"/>
    <property type="evidence" value="ECO:0007669"/>
    <property type="project" value="UniProtKB-KW"/>
</dbReference>
<dbReference type="GO" id="GO:0000160">
    <property type="term" value="P:phosphorelay signal transduction system"/>
    <property type="evidence" value="ECO:0007669"/>
    <property type="project" value="UniProtKB-KW"/>
</dbReference>
<dbReference type="CDD" id="cd17584">
    <property type="entry name" value="REC_typeB_ARR-like"/>
    <property type="match status" value="1"/>
</dbReference>
<dbReference type="Gene3D" id="3.40.50.2300">
    <property type="match status" value="1"/>
</dbReference>
<dbReference type="Gene3D" id="1.10.10.60">
    <property type="entry name" value="Homeodomain-like"/>
    <property type="match status" value="1"/>
</dbReference>
<dbReference type="InterPro" id="IPR045279">
    <property type="entry name" value="ARR-like"/>
</dbReference>
<dbReference type="InterPro" id="IPR011006">
    <property type="entry name" value="CheY-like_superfamily"/>
</dbReference>
<dbReference type="InterPro" id="IPR009057">
    <property type="entry name" value="Homeodomain-like_sf"/>
</dbReference>
<dbReference type="InterPro" id="IPR006447">
    <property type="entry name" value="Myb_dom_plants"/>
</dbReference>
<dbReference type="InterPro" id="IPR001789">
    <property type="entry name" value="Sig_transdc_resp-reg_receiver"/>
</dbReference>
<dbReference type="NCBIfam" id="TIGR01557">
    <property type="entry name" value="myb_SHAQKYF"/>
    <property type="match status" value="1"/>
</dbReference>
<dbReference type="PANTHER" id="PTHR43874">
    <property type="entry name" value="TWO-COMPONENT RESPONSE REGULATOR"/>
    <property type="match status" value="1"/>
</dbReference>
<dbReference type="PANTHER" id="PTHR43874:SF92">
    <property type="entry name" value="TWO-COMPONENT RESPONSE REGULATOR ORR28"/>
    <property type="match status" value="1"/>
</dbReference>
<dbReference type="Pfam" id="PF00072">
    <property type="entry name" value="Response_reg"/>
    <property type="match status" value="1"/>
</dbReference>
<dbReference type="SMART" id="SM00448">
    <property type="entry name" value="REC"/>
    <property type="match status" value="1"/>
</dbReference>
<dbReference type="SUPFAM" id="SSF52172">
    <property type="entry name" value="CheY-like"/>
    <property type="match status" value="1"/>
</dbReference>
<dbReference type="SUPFAM" id="SSF46689">
    <property type="entry name" value="Homeodomain-like"/>
    <property type="match status" value="1"/>
</dbReference>
<dbReference type="PROSITE" id="PS50110">
    <property type="entry name" value="RESPONSE_REGULATORY"/>
    <property type="match status" value="1"/>
</dbReference>
<gene>
    <name evidence="5" type="primary">RR28</name>
    <name evidence="6" type="ORF">OsI_15446</name>
</gene>
<evidence type="ECO:0000250" key="1">
    <source>
        <dbReference type="UniProtKB" id="Q940D0"/>
    </source>
</evidence>
<evidence type="ECO:0000255" key="2">
    <source>
        <dbReference type="PROSITE-ProRule" id="PRU00169"/>
    </source>
</evidence>
<evidence type="ECO:0000255" key="3">
    <source>
        <dbReference type="PROSITE-ProRule" id="PRU00625"/>
    </source>
</evidence>
<evidence type="ECO:0000256" key="4">
    <source>
        <dbReference type="SAM" id="MobiDB-lite"/>
    </source>
</evidence>
<evidence type="ECO:0000305" key="5"/>
<evidence type="ECO:0000312" key="6">
    <source>
        <dbReference type="EMBL" id="EAY93660.1"/>
    </source>
</evidence>
<accession>A2XS50</accession>
<protein>
    <recommendedName>
        <fullName evidence="5">Two-component response regulator ORR28</fullName>
    </recommendedName>
</protein>